<reference key="1">
    <citation type="submission" date="2004-06" db="EMBL/GenBank/DDBJ databases">
        <authorList>
            <consortium name="NIH - Xenopus Gene Collection (XGC) project"/>
        </authorList>
    </citation>
    <scope>NUCLEOTIDE SEQUENCE [LARGE SCALE MRNA]</scope>
    <source>
        <tissue>Embryo</tissue>
    </source>
</reference>
<reference key="2">
    <citation type="journal article" date="2003" name="J. Cell Biol.">
        <title>SUMO-2/3 regulates topoisomerase II in mitosis.</title>
        <authorList>
            <person name="Azuma Y."/>
            <person name="Arnaoutov A."/>
            <person name="Dasso M."/>
        </authorList>
    </citation>
    <scope>FUNCTION</scope>
</reference>
<reference key="3">
    <citation type="journal article" date="2005" name="EMBO J.">
        <title>PIASy mediates SUMO-2 conjugation of Topoisomerase-II on mitotic chromosomes.</title>
        <authorList>
            <person name="Azuma Y."/>
            <person name="Arnaoutov A."/>
            <person name="Anan T."/>
            <person name="Dasso M."/>
        </authorList>
    </citation>
    <scope>FUNCTION</scope>
</reference>
<evidence type="ECO:0000250" key="1"/>
<evidence type="ECO:0000255" key="2">
    <source>
        <dbReference type="PROSITE-ProRule" id="PRU00214"/>
    </source>
</evidence>
<evidence type="ECO:0000269" key="3">
    <source>
    </source>
</evidence>
<evidence type="ECO:0000269" key="4">
    <source>
    </source>
</evidence>
<evidence type="ECO:0000305" key="5"/>
<proteinExistence type="inferred from homology"/>
<feature type="chain" id="PRO_0000269473" description="Small ubiquitin-related modifier 2-B">
    <location>
        <begin position="1"/>
        <end position="93"/>
    </location>
</feature>
<feature type="propeptide" id="PRO_0000269474" evidence="1">
    <location>
        <begin position="94"/>
        <end position="95"/>
    </location>
</feature>
<feature type="domain" description="Ubiquitin-like" evidence="2">
    <location>
        <begin position="16"/>
        <end position="95"/>
    </location>
</feature>
<feature type="cross-link" description="Glycyl lysine isopeptide (Lys-Gly) (interchain with G-Cter in SUMO)" evidence="1">
    <location>
        <position position="11"/>
    </location>
</feature>
<feature type="cross-link" description="Glycyl lysine isopeptide (Gly-Lys) (interchain with K-? in acceptor proteins)" evidence="2">
    <location>
        <position position="93"/>
    </location>
</feature>
<organism>
    <name type="scientific">Xenopus laevis</name>
    <name type="common">African clawed frog</name>
    <dbReference type="NCBI Taxonomy" id="8355"/>
    <lineage>
        <taxon>Eukaryota</taxon>
        <taxon>Metazoa</taxon>
        <taxon>Chordata</taxon>
        <taxon>Craniata</taxon>
        <taxon>Vertebrata</taxon>
        <taxon>Euteleostomi</taxon>
        <taxon>Amphibia</taxon>
        <taxon>Batrachia</taxon>
        <taxon>Anura</taxon>
        <taxon>Pipoidea</taxon>
        <taxon>Pipidae</taxon>
        <taxon>Xenopodinae</taxon>
        <taxon>Xenopus</taxon>
        <taxon>Xenopus</taxon>
    </lineage>
</organism>
<accession>Q6GPW2</accession>
<protein>
    <recommendedName>
        <fullName>Small ubiquitin-related modifier 2-B</fullName>
        <shortName>SUMO-2-B</shortName>
    </recommendedName>
</protein>
<name>SMO2B_XENLA</name>
<keyword id="KW-1017">Isopeptide bond</keyword>
<keyword id="KW-0539">Nucleus</keyword>
<keyword id="KW-1185">Reference proteome</keyword>
<keyword id="KW-0832">Ubl conjugation</keyword>
<keyword id="KW-0833">Ubl conjugation pathway</keyword>
<sequence length="95" mass="10872">MADDKPKEGVKTENNDHINLKVAGQDGSVVQFKIKRHTPLNKLMKAYCERQGLSMRQIRFRFDGQPINETDTPAQLEMEDEDTIDVFQQQTGGSY</sequence>
<comment type="function">
    <text evidence="3 4">Ubiquitin-like protein that can be covalently attached to proteins as a monomer or as a lysine-linked polymer. Covalent attachment via an isopeptide bond to its substrates requires prior activation by the E1 complex sae1-sae2 and linkage to the E2 enzyme ube2i, and can be promoted by an E3 ligase such as pias1-4. This post-translational modification on lysine residues of proteins plays a crucial role in a number of cellular processes such as nuclear transport, DNA replication and repair, mitosis and signal transduction. Polymeric sumo2 chains are also susceptible to polyubiquitination which functions as a signal for proteasomal degradation of modified proteins.</text>
</comment>
<comment type="subunit">
    <text>Interacts with sae2 and ube2i. Covalently attached to a number of proteins, including top2.</text>
</comment>
<comment type="subcellular location">
    <subcellularLocation>
        <location evidence="1">Nucleus</location>
    </subcellularLocation>
</comment>
<comment type="PTM">
    <text evidence="1">Polymeric chains can be formed through Lys-11 cross-linking.</text>
</comment>
<comment type="PTM">
    <text evidence="1">Cleavage of precursor form by a sentrin-specific protease is necessary for function.</text>
</comment>
<comment type="similarity">
    <text evidence="5">Belongs to the ubiquitin family. SUMO subfamily.</text>
</comment>
<gene>
    <name type="primary">sumo2-b</name>
</gene>
<dbReference type="EMBL" id="BC072995">
    <property type="protein sequence ID" value="AAH72995.1"/>
    <property type="molecule type" value="mRNA"/>
</dbReference>
<dbReference type="SMR" id="Q6GPW2"/>
<dbReference type="BioGRID" id="102184">
    <property type="interactions" value="5"/>
</dbReference>
<dbReference type="DNASU" id="444021"/>
<dbReference type="GeneID" id="444021"/>
<dbReference type="KEGG" id="xla:444021"/>
<dbReference type="AGR" id="Xenbase:XB-GENE-969144"/>
<dbReference type="CTD" id="444021"/>
<dbReference type="Xenbase" id="XB-GENE-969144">
    <property type="gene designation" value="sumo2.S"/>
</dbReference>
<dbReference type="OMA" id="NREASIN"/>
<dbReference type="OrthoDB" id="9925208at2759"/>
<dbReference type="Proteomes" id="UP000186698">
    <property type="component" value="Chromosome 9_10S"/>
</dbReference>
<dbReference type="Bgee" id="444021">
    <property type="expression patterns" value="Expressed in gastrula and 19 other cell types or tissues"/>
</dbReference>
<dbReference type="GO" id="GO:0005634">
    <property type="term" value="C:nucleus"/>
    <property type="evidence" value="ECO:0000318"/>
    <property type="project" value="GO_Central"/>
</dbReference>
<dbReference type="GO" id="GO:0031386">
    <property type="term" value="F:protein tag activity"/>
    <property type="evidence" value="ECO:0000318"/>
    <property type="project" value="GO_Central"/>
</dbReference>
<dbReference type="GO" id="GO:0044389">
    <property type="term" value="F:ubiquitin-like protein ligase binding"/>
    <property type="evidence" value="ECO:0000318"/>
    <property type="project" value="GO_Central"/>
</dbReference>
<dbReference type="GO" id="GO:0016925">
    <property type="term" value="P:protein sumoylation"/>
    <property type="evidence" value="ECO:0000318"/>
    <property type="project" value="GO_Central"/>
</dbReference>
<dbReference type="CDD" id="cd16115">
    <property type="entry name" value="Ubl_SUMO2_3_4"/>
    <property type="match status" value="1"/>
</dbReference>
<dbReference type="FunFam" id="3.10.20.90:FF:000482">
    <property type="entry name" value="Small ubiquitin-related modifier 2"/>
    <property type="match status" value="1"/>
</dbReference>
<dbReference type="Gene3D" id="3.10.20.90">
    <property type="entry name" value="Phosphatidylinositol 3-kinase Catalytic Subunit, Chain A, domain 1"/>
    <property type="match status" value="1"/>
</dbReference>
<dbReference type="InterPro" id="IPR022617">
    <property type="entry name" value="Rad60/SUMO-like_dom"/>
</dbReference>
<dbReference type="InterPro" id="IPR000626">
    <property type="entry name" value="Ubiquitin-like_dom"/>
</dbReference>
<dbReference type="InterPro" id="IPR029071">
    <property type="entry name" value="Ubiquitin-like_domsf"/>
</dbReference>
<dbReference type="PANTHER" id="PTHR10562">
    <property type="entry name" value="SMALL UBIQUITIN-RELATED MODIFIER"/>
    <property type="match status" value="1"/>
</dbReference>
<dbReference type="Pfam" id="PF11976">
    <property type="entry name" value="Rad60-SLD"/>
    <property type="match status" value="1"/>
</dbReference>
<dbReference type="SMART" id="SM00213">
    <property type="entry name" value="UBQ"/>
    <property type="match status" value="1"/>
</dbReference>
<dbReference type="SUPFAM" id="SSF54236">
    <property type="entry name" value="Ubiquitin-like"/>
    <property type="match status" value="1"/>
</dbReference>
<dbReference type="PROSITE" id="PS50053">
    <property type="entry name" value="UBIQUITIN_2"/>
    <property type="match status" value="1"/>
</dbReference>